<keyword id="KW-0963">Cytoplasm</keyword>
<keyword id="KW-0694">RNA-binding</keyword>
<feature type="chain" id="PRO_1000002080" description="SsrA-binding protein">
    <location>
        <begin position="1"/>
        <end position="154"/>
    </location>
</feature>
<feature type="region of interest" description="Disordered" evidence="2">
    <location>
        <begin position="131"/>
        <end position="154"/>
    </location>
</feature>
<feature type="compositionally biased region" description="Basic and acidic residues" evidence="2">
    <location>
        <begin position="132"/>
        <end position="154"/>
    </location>
</feature>
<accession>A0ALD2</accession>
<sequence>MPKGDGKLVAQNKKARHDYAIEETFEAGIVLQGTEIKSVRNARVNLKDSYARIDKGEIFLHNMHISPYEQGNRYNHDPLRTRKLLLHKKQISRLIGETKESGYSIVPLKMYIKDGYAKVLIGVARGKKKYDKRQDLKQKEAKRDIERAFKERQQ</sequence>
<evidence type="ECO:0000255" key="1">
    <source>
        <dbReference type="HAMAP-Rule" id="MF_00023"/>
    </source>
</evidence>
<evidence type="ECO:0000256" key="2">
    <source>
        <dbReference type="SAM" id="MobiDB-lite"/>
    </source>
</evidence>
<comment type="function">
    <text evidence="1">Required for rescue of stalled ribosomes mediated by trans-translation. Binds to transfer-messenger RNA (tmRNA), required for stable association of tmRNA with ribosomes. tmRNA and SmpB together mimic tRNA shape, replacing the anticodon stem-loop with SmpB. tmRNA is encoded by the ssrA gene; the 2 termini fold to resemble tRNA(Ala) and it encodes a 'tag peptide', a short internal open reading frame. During trans-translation Ala-aminoacylated tmRNA acts like a tRNA, entering the A-site of stalled ribosomes, displacing the stalled mRNA. The ribosome then switches to translate the ORF on the tmRNA; the nascent peptide is terminated with the 'tag peptide' encoded by the tmRNA and targeted for degradation. The ribosome is freed to recommence translation, which seems to be the essential function of trans-translation.</text>
</comment>
<comment type="subcellular location">
    <subcellularLocation>
        <location evidence="1">Cytoplasm</location>
    </subcellularLocation>
    <text evidence="1">The tmRNA-SmpB complex associates with stalled 70S ribosomes.</text>
</comment>
<comment type="similarity">
    <text evidence="1">Belongs to the SmpB family.</text>
</comment>
<gene>
    <name evidence="1" type="primary">smpB</name>
    <name type="ordered locus">lwe2396</name>
</gene>
<organism>
    <name type="scientific">Listeria welshimeri serovar 6b (strain ATCC 35897 / DSM 20650 / CCUG 15529 / CIP 8149 / NCTC 11857 / SLCC 5334 / V8)</name>
    <dbReference type="NCBI Taxonomy" id="386043"/>
    <lineage>
        <taxon>Bacteria</taxon>
        <taxon>Bacillati</taxon>
        <taxon>Bacillota</taxon>
        <taxon>Bacilli</taxon>
        <taxon>Bacillales</taxon>
        <taxon>Listeriaceae</taxon>
        <taxon>Listeria</taxon>
    </lineage>
</organism>
<dbReference type="EMBL" id="AM263198">
    <property type="protein sequence ID" value="CAK21814.1"/>
    <property type="molecule type" value="Genomic_DNA"/>
</dbReference>
<dbReference type="RefSeq" id="WP_003723350.1">
    <property type="nucleotide sequence ID" value="NC_008555.1"/>
</dbReference>
<dbReference type="SMR" id="A0ALD2"/>
<dbReference type="STRING" id="386043.lwe2396"/>
<dbReference type="GeneID" id="93240313"/>
<dbReference type="KEGG" id="lwe:lwe2396"/>
<dbReference type="eggNOG" id="COG0691">
    <property type="taxonomic scope" value="Bacteria"/>
</dbReference>
<dbReference type="HOGENOM" id="CLU_108953_0_0_9"/>
<dbReference type="OrthoDB" id="9805462at2"/>
<dbReference type="Proteomes" id="UP000000779">
    <property type="component" value="Chromosome"/>
</dbReference>
<dbReference type="GO" id="GO:0005829">
    <property type="term" value="C:cytosol"/>
    <property type="evidence" value="ECO:0007669"/>
    <property type="project" value="TreeGrafter"/>
</dbReference>
<dbReference type="GO" id="GO:0003723">
    <property type="term" value="F:RNA binding"/>
    <property type="evidence" value="ECO:0007669"/>
    <property type="project" value="UniProtKB-UniRule"/>
</dbReference>
<dbReference type="GO" id="GO:0070929">
    <property type="term" value="P:trans-translation"/>
    <property type="evidence" value="ECO:0007669"/>
    <property type="project" value="UniProtKB-UniRule"/>
</dbReference>
<dbReference type="CDD" id="cd09294">
    <property type="entry name" value="SmpB"/>
    <property type="match status" value="1"/>
</dbReference>
<dbReference type="Gene3D" id="2.40.280.10">
    <property type="match status" value="1"/>
</dbReference>
<dbReference type="HAMAP" id="MF_00023">
    <property type="entry name" value="SmpB"/>
    <property type="match status" value="1"/>
</dbReference>
<dbReference type="InterPro" id="IPR023620">
    <property type="entry name" value="SmpB"/>
</dbReference>
<dbReference type="InterPro" id="IPR000037">
    <property type="entry name" value="SsrA-bd_prot"/>
</dbReference>
<dbReference type="InterPro" id="IPR020081">
    <property type="entry name" value="SsrA-bd_prot_CS"/>
</dbReference>
<dbReference type="NCBIfam" id="NF003843">
    <property type="entry name" value="PRK05422.1"/>
    <property type="match status" value="1"/>
</dbReference>
<dbReference type="NCBIfam" id="TIGR00086">
    <property type="entry name" value="smpB"/>
    <property type="match status" value="1"/>
</dbReference>
<dbReference type="PANTHER" id="PTHR30308:SF2">
    <property type="entry name" value="SSRA-BINDING PROTEIN"/>
    <property type="match status" value="1"/>
</dbReference>
<dbReference type="PANTHER" id="PTHR30308">
    <property type="entry name" value="TMRNA-BINDING COMPONENT OF TRANS-TRANSLATION TAGGING COMPLEX"/>
    <property type="match status" value="1"/>
</dbReference>
<dbReference type="Pfam" id="PF01668">
    <property type="entry name" value="SmpB"/>
    <property type="match status" value="1"/>
</dbReference>
<dbReference type="SUPFAM" id="SSF74982">
    <property type="entry name" value="Small protein B (SmpB)"/>
    <property type="match status" value="1"/>
</dbReference>
<dbReference type="PROSITE" id="PS01317">
    <property type="entry name" value="SSRP"/>
    <property type="match status" value="1"/>
</dbReference>
<proteinExistence type="inferred from homology"/>
<name>SSRP_LISW6</name>
<reference key="1">
    <citation type="journal article" date="2006" name="J. Bacteriol.">
        <title>Whole-genome sequence of Listeria welshimeri reveals common steps in genome reduction with Listeria innocua as compared to Listeria monocytogenes.</title>
        <authorList>
            <person name="Hain T."/>
            <person name="Steinweg C."/>
            <person name="Kuenne C.T."/>
            <person name="Billion A."/>
            <person name="Ghai R."/>
            <person name="Chatterjee S.S."/>
            <person name="Domann E."/>
            <person name="Kaerst U."/>
            <person name="Goesmann A."/>
            <person name="Bekel T."/>
            <person name="Bartels D."/>
            <person name="Kaiser O."/>
            <person name="Meyer F."/>
            <person name="Puehler A."/>
            <person name="Weisshaar B."/>
            <person name="Wehland J."/>
            <person name="Liang C."/>
            <person name="Dandekar T."/>
            <person name="Lampidis R."/>
            <person name="Kreft J."/>
            <person name="Goebel W."/>
            <person name="Chakraborty T."/>
        </authorList>
    </citation>
    <scope>NUCLEOTIDE SEQUENCE [LARGE SCALE GENOMIC DNA]</scope>
    <source>
        <strain>ATCC 35897 / DSM 20650 / CCUG 15529 / CIP 8149 / NCTC 11857 / SLCC 5334 / V8</strain>
    </source>
</reference>
<protein>
    <recommendedName>
        <fullName evidence="1">SsrA-binding protein</fullName>
    </recommendedName>
    <alternativeName>
        <fullName evidence="1">Small protein B</fullName>
    </alternativeName>
</protein>